<feature type="chain" id="PRO_0000207183" description="RNA polymerase-associated protein RapA">
    <location>
        <begin position="1"/>
        <end position="948"/>
    </location>
</feature>
<feature type="domain" description="Helicase ATP-binding" evidence="1">
    <location>
        <begin position="164"/>
        <end position="332"/>
    </location>
</feature>
<feature type="domain" description="Helicase C-terminal" evidence="1">
    <location>
        <begin position="473"/>
        <end position="627"/>
    </location>
</feature>
<feature type="short sequence motif" description="DEAH box">
    <location>
        <begin position="278"/>
        <end position="281"/>
    </location>
</feature>
<feature type="binding site" evidence="1">
    <location>
        <begin position="177"/>
        <end position="184"/>
    </location>
    <ligand>
        <name>ATP</name>
        <dbReference type="ChEBI" id="CHEBI:30616"/>
    </ligand>
</feature>
<name>RAPA_PSESM</name>
<keyword id="KW-0010">Activator</keyword>
<keyword id="KW-0067">ATP-binding</keyword>
<keyword id="KW-0238">DNA-binding</keyword>
<keyword id="KW-0347">Helicase</keyword>
<keyword id="KW-0378">Hydrolase</keyword>
<keyword id="KW-0547">Nucleotide-binding</keyword>
<keyword id="KW-1185">Reference proteome</keyword>
<keyword id="KW-0804">Transcription</keyword>
<keyword id="KW-0805">Transcription regulation</keyword>
<evidence type="ECO:0000255" key="1">
    <source>
        <dbReference type="HAMAP-Rule" id="MF_01821"/>
    </source>
</evidence>
<comment type="function">
    <text evidence="1">Transcription regulator that activates transcription by stimulating RNA polymerase (RNAP) recycling in case of stress conditions such as supercoiled DNA or high salt concentrations. Probably acts by releasing the RNAP, when it is trapped or immobilized on tightly supercoiled DNA. Does not activate transcription on linear DNA. Probably not involved in DNA repair.</text>
</comment>
<comment type="subunit">
    <text evidence="1">Interacts with the RNAP. Has a higher affinity for the core RNAP than for the holoenzyme. Its ATPase activity is stimulated by binding to RNAP.</text>
</comment>
<comment type="similarity">
    <text evidence="1">Belongs to the SNF2/RAD54 helicase family. RapA subfamily.</text>
</comment>
<proteinExistence type="inferred from homology"/>
<gene>
    <name evidence="1" type="primary">rapA</name>
    <name type="synonym">hepA</name>
    <name type="ordered locus">PSPTO_4104</name>
</gene>
<accession>Q87XS2</accession>
<reference key="1">
    <citation type="journal article" date="2003" name="Proc. Natl. Acad. Sci. U.S.A.">
        <title>The complete genome sequence of the Arabidopsis and tomato pathogen Pseudomonas syringae pv. tomato DC3000.</title>
        <authorList>
            <person name="Buell C.R."/>
            <person name="Joardar V."/>
            <person name="Lindeberg M."/>
            <person name="Selengut J."/>
            <person name="Paulsen I.T."/>
            <person name="Gwinn M.L."/>
            <person name="Dodson R.J."/>
            <person name="DeBoy R.T."/>
            <person name="Durkin A.S."/>
            <person name="Kolonay J.F."/>
            <person name="Madupu R."/>
            <person name="Daugherty S.C."/>
            <person name="Brinkac L.M."/>
            <person name="Beanan M.J."/>
            <person name="Haft D.H."/>
            <person name="Nelson W.C."/>
            <person name="Davidsen T.M."/>
            <person name="Zafar N."/>
            <person name="Zhou L."/>
            <person name="Liu J."/>
            <person name="Yuan Q."/>
            <person name="Khouri H.M."/>
            <person name="Fedorova N.B."/>
            <person name="Tran B."/>
            <person name="Russell D."/>
            <person name="Berry K.J."/>
            <person name="Utterback T.R."/>
            <person name="Van Aken S.E."/>
            <person name="Feldblyum T.V."/>
            <person name="D'Ascenzo M."/>
            <person name="Deng W.-L."/>
            <person name="Ramos A.R."/>
            <person name="Alfano J.R."/>
            <person name="Cartinhour S."/>
            <person name="Chatterjee A.K."/>
            <person name="Delaney T.P."/>
            <person name="Lazarowitz S.G."/>
            <person name="Martin G.B."/>
            <person name="Schneider D.J."/>
            <person name="Tang X."/>
            <person name="Bender C.L."/>
            <person name="White O."/>
            <person name="Fraser C.M."/>
            <person name="Collmer A."/>
        </authorList>
    </citation>
    <scope>NUCLEOTIDE SEQUENCE [LARGE SCALE GENOMIC DNA]</scope>
    <source>
        <strain>ATCC BAA-871 / DC3000</strain>
    </source>
</reference>
<sequence length="948" mass="106625">MAQQYQPGQRWISDSEAELGLGTVLAQDGRLLTVLYPATGETRQYALRNAPLTRVRFSPGDVITHFENWKMTVREVDDVDGLLVYHGLNAQNEVVTLPETQLSNFIQFRLATDRLFAGQIDQLSWFSLRYNTLEHTSRQLQSSLWGLGGVRAQPIAHQLHIAREVADRIAPRVLLADEVGLGKTIEAGLVIHRQLLSGRANRVLILVPENLQHQWLVEMRRRFNLQVALFDAERFMESDAGNPFEDTQLALVALEWLVEDEKAQDALFAAGWDLMVVDEAHHLVWHEEKASREYSLVEQLAEVIAGVLLLTATPEQLGQDSHFARLRLLDPNRFHDLKAFRAESENYRPVAQAVQELLDKGKLSAAAQKTIHGFLGAEGDTLLAAVNAGDDEAKARLIRELLDRHGTGRVLFRNTRAAVQGFPERKLHQYPLPCPVEYLELPVGEHADLYPEVSFQSQSDASEEERWWRFDPRVEWLIDTLKMLKRVKVLVICAHAETAMDLEDALRVRSGIPATVFHEGMNILERDRAAAYFADEEFGAQVLICSEIGSEGRNFQFSHHLVLFDLPSHPDLLEQRIGRLDRIGQKHVIELHVPFLETSPQARLFQWYHEALNAFLNTCPTGNALQHQFGPRLLPLLESGDDDEWQSLIDEARSERERLESELHTGRDRLLELNSGGAGEGEALVEDILEQDDQFSLPIYMETLFDAFGIDSEDHSENALILKPSEKMLDASFPLGDDEGVTITYDRNQALSREDMQFITWEHPMVQGGMDLVLSGSMGNTAVALIKNKALKPGTVLLELIYVSEVVAPRSLQLGRYLPPAALRCLLDANGNDLSSRVSFNTLNDQLESVPRASANKFIQAQRDQLTPRINAGEEKITPKHAERVAEAQRRLAADTEEELARLTALQAVNPTVRDSELVALRTQREQGLAMLEKAALRLEAIRVLVAG</sequence>
<protein>
    <recommendedName>
        <fullName evidence="1">RNA polymerase-associated protein RapA</fullName>
        <ecNumber evidence="1">3.6.4.-</ecNumber>
    </recommendedName>
    <alternativeName>
        <fullName evidence="1">ATP-dependent helicase HepA</fullName>
    </alternativeName>
</protein>
<organism>
    <name type="scientific">Pseudomonas syringae pv. tomato (strain ATCC BAA-871 / DC3000)</name>
    <dbReference type="NCBI Taxonomy" id="223283"/>
    <lineage>
        <taxon>Bacteria</taxon>
        <taxon>Pseudomonadati</taxon>
        <taxon>Pseudomonadota</taxon>
        <taxon>Gammaproteobacteria</taxon>
        <taxon>Pseudomonadales</taxon>
        <taxon>Pseudomonadaceae</taxon>
        <taxon>Pseudomonas</taxon>
    </lineage>
</organism>
<dbReference type="EC" id="3.6.4.-" evidence="1"/>
<dbReference type="EMBL" id="AE016853">
    <property type="protein sequence ID" value="AAO57560.1"/>
    <property type="molecule type" value="Genomic_DNA"/>
</dbReference>
<dbReference type="RefSeq" id="NP_793865.1">
    <property type="nucleotide sequence ID" value="NC_004578.1"/>
</dbReference>
<dbReference type="RefSeq" id="WP_005764946.1">
    <property type="nucleotide sequence ID" value="NC_004578.1"/>
</dbReference>
<dbReference type="SMR" id="Q87XS2"/>
<dbReference type="STRING" id="223283.PSPTO_4104"/>
<dbReference type="GeneID" id="1185784"/>
<dbReference type="KEGG" id="pst:PSPTO_4104"/>
<dbReference type="PATRIC" id="fig|223283.9.peg.4210"/>
<dbReference type="eggNOG" id="COG0553">
    <property type="taxonomic scope" value="Bacteria"/>
</dbReference>
<dbReference type="HOGENOM" id="CLU_011520_0_0_6"/>
<dbReference type="OrthoDB" id="9814088at2"/>
<dbReference type="PhylomeDB" id="Q87XS2"/>
<dbReference type="Proteomes" id="UP000002515">
    <property type="component" value="Chromosome"/>
</dbReference>
<dbReference type="GO" id="GO:0005524">
    <property type="term" value="F:ATP binding"/>
    <property type="evidence" value="ECO:0007669"/>
    <property type="project" value="UniProtKB-UniRule"/>
</dbReference>
<dbReference type="GO" id="GO:0003677">
    <property type="term" value="F:DNA binding"/>
    <property type="evidence" value="ECO:0007669"/>
    <property type="project" value="UniProtKB-KW"/>
</dbReference>
<dbReference type="GO" id="GO:0004386">
    <property type="term" value="F:helicase activity"/>
    <property type="evidence" value="ECO:0007669"/>
    <property type="project" value="UniProtKB-UniRule"/>
</dbReference>
<dbReference type="GO" id="GO:0016817">
    <property type="term" value="F:hydrolase activity, acting on acid anhydrides"/>
    <property type="evidence" value="ECO:0007669"/>
    <property type="project" value="InterPro"/>
</dbReference>
<dbReference type="GO" id="GO:0006355">
    <property type="term" value="P:regulation of DNA-templated transcription"/>
    <property type="evidence" value="ECO:0007669"/>
    <property type="project" value="UniProtKB-UniRule"/>
</dbReference>
<dbReference type="CDD" id="cd18011">
    <property type="entry name" value="DEXDc_RapA"/>
    <property type="match status" value="1"/>
</dbReference>
<dbReference type="CDD" id="cd18793">
    <property type="entry name" value="SF2_C_SNF"/>
    <property type="match status" value="1"/>
</dbReference>
<dbReference type="Gene3D" id="2.30.30.140">
    <property type="match status" value="1"/>
</dbReference>
<dbReference type="Gene3D" id="2.30.30.930">
    <property type="match status" value="1"/>
</dbReference>
<dbReference type="Gene3D" id="3.30.360.80">
    <property type="match status" value="1"/>
</dbReference>
<dbReference type="Gene3D" id="6.10.140.1500">
    <property type="match status" value="1"/>
</dbReference>
<dbReference type="Gene3D" id="6.10.140.2230">
    <property type="match status" value="1"/>
</dbReference>
<dbReference type="Gene3D" id="3.40.50.300">
    <property type="entry name" value="P-loop containing nucleotide triphosphate hydrolases"/>
    <property type="match status" value="1"/>
</dbReference>
<dbReference type="Gene3D" id="3.40.50.10810">
    <property type="entry name" value="Tandem AAA-ATPase domain"/>
    <property type="match status" value="1"/>
</dbReference>
<dbReference type="HAMAP" id="MF_01821">
    <property type="entry name" value="Helicase_RapA"/>
    <property type="match status" value="1"/>
</dbReference>
<dbReference type="InterPro" id="IPR014001">
    <property type="entry name" value="Helicase_ATP-bd"/>
</dbReference>
<dbReference type="InterPro" id="IPR001650">
    <property type="entry name" value="Helicase_C-like"/>
</dbReference>
<dbReference type="InterPro" id="IPR023949">
    <property type="entry name" value="Helicase_RapA"/>
</dbReference>
<dbReference type="InterPro" id="IPR027417">
    <property type="entry name" value="P-loop_NTPase"/>
</dbReference>
<dbReference type="InterPro" id="IPR022737">
    <property type="entry name" value="RapA_C"/>
</dbReference>
<dbReference type="InterPro" id="IPR038718">
    <property type="entry name" value="SNF2-like_sf"/>
</dbReference>
<dbReference type="InterPro" id="IPR049730">
    <property type="entry name" value="SNF2/RAD54-like_C"/>
</dbReference>
<dbReference type="InterPro" id="IPR000330">
    <property type="entry name" value="SNF2_N"/>
</dbReference>
<dbReference type="InterPro" id="IPR040765">
    <property type="entry name" value="Tudor_1_RapA"/>
</dbReference>
<dbReference type="InterPro" id="IPR040766">
    <property type="entry name" value="Tudor_2_RapA"/>
</dbReference>
<dbReference type="NCBIfam" id="NF003426">
    <property type="entry name" value="PRK04914.1"/>
    <property type="match status" value="1"/>
</dbReference>
<dbReference type="PANTHER" id="PTHR45766">
    <property type="entry name" value="DNA ANNEALING HELICASE AND ENDONUCLEASE ZRANB3 FAMILY MEMBER"/>
    <property type="match status" value="1"/>
</dbReference>
<dbReference type="PANTHER" id="PTHR45766:SF6">
    <property type="entry name" value="SWI_SNF-RELATED MATRIX-ASSOCIATED ACTIN-DEPENDENT REGULATOR OF CHROMATIN SUBFAMILY A-LIKE PROTEIN 1"/>
    <property type="match status" value="1"/>
</dbReference>
<dbReference type="Pfam" id="PF00271">
    <property type="entry name" value="Helicase_C"/>
    <property type="match status" value="1"/>
</dbReference>
<dbReference type="Pfam" id="PF12137">
    <property type="entry name" value="RapA_C"/>
    <property type="match status" value="1"/>
</dbReference>
<dbReference type="Pfam" id="PF00176">
    <property type="entry name" value="SNF2-rel_dom"/>
    <property type="match status" value="1"/>
</dbReference>
<dbReference type="Pfam" id="PF18339">
    <property type="entry name" value="Tudor_1_RapA"/>
    <property type="match status" value="1"/>
</dbReference>
<dbReference type="Pfam" id="PF18337">
    <property type="entry name" value="Tudor_RapA"/>
    <property type="match status" value="1"/>
</dbReference>
<dbReference type="SMART" id="SM00487">
    <property type="entry name" value="DEXDc"/>
    <property type="match status" value="1"/>
</dbReference>
<dbReference type="SMART" id="SM00490">
    <property type="entry name" value="HELICc"/>
    <property type="match status" value="1"/>
</dbReference>
<dbReference type="SUPFAM" id="SSF52540">
    <property type="entry name" value="P-loop containing nucleoside triphosphate hydrolases"/>
    <property type="match status" value="2"/>
</dbReference>
<dbReference type="PROSITE" id="PS51192">
    <property type="entry name" value="HELICASE_ATP_BIND_1"/>
    <property type="match status" value="1"/>
</dbReference>
<dbReference type="PROSITE" id="PS51194">
    <property type="entry name" value="HELICASE_CTER"/>
    <property type="match status" value="1"/>
</dbReference>